<organism>
    <name type="scientific">Chlorobium chlorochromatii (strain CaD3)</name>
    <dbReference type="NCBI Taxonomy" id="340177"/>
    <lineage>
        <taxon>Bacteria</taxon>
        <taxon>Pseudomonadati</taxon>
        <taxon>Chlorobiota</taxon>
        <taxon>Chlorobiia</taxon>
        <taxon>Chlorobiales</taxon>
        <taxon>Chlorobiaceae</taxon>
        <taxon>Chlorobium/Pelodictyon group</taxon>
        <taxon>Chlorobium</taxon>
    </lineage>
</organism>
<dbReference type="EMBL" id="CP000108">
    <property type="protein sequence ID" value="ABB29099.1"/>
    <property type="molecule type" value="Genomic_DNA"/>
</dbReference>
<dbReference type="SMR" id="Q3APH6"/>
<dbReference type="STRING" id="340177.Cag_1848"/>
<dbReference type="KEGG" id="cch:Cag_1848"/>
<dbReference type="eggNOG" id="COG0090">
    <property type="taxonomic scope" value="Bacteria"/>
</dbReference>
<dbReference type="HOGENOM" id="CLU_036235_2_1_10"/>
<dbReference type="OrthoDB" id="9778722at2"/>
<dbReference type="GO" id="GO:0015934">
    <property type="term" value="C:large ribosomal subunit"/>
    <property type="evidence" value="ECO:0007669"/>
    <property type="project" value="InterPro"/>
</dbReference>
<dbReference type="GO" id="GO:0019843">
    <property type="term" value="F:rRNA binding"/>
    <property type="evidence" value="ECO:0007669"/>
    <property type="project" value="UniProtKB-UniRule"/>
</dbReference>
<dbReference type="GO" id="GO:0003735">
    <property type="term" value="F:structural constituent of ribosome"/>
    <property type="evidence" value="ECO:0007669"/>
    <property type="project" value="InterPro"/>
</dbReference>
<dbReference type="GO" id="GO:0016740">
    <property type="term" value="F:transferase activity"/>
    <property type="evidence" value="ECO:0007669"/>
    <property type="project" value="InterPro"/>
</dbReference>
<dbReference type="GO" id="GO:0002181">
    <property type="term" value="P:cytoplasmic translation"/>
    <property type="evidence" value="ECO:0007669"/>
    <property type="project" value="TreeGrafter"/>
</dbReference>
<dbReference type="FunFam" id="2.30.30.30:FF:000001">
    <property type="entry name" value="50S ribosomal protein L2"/>
    <property type="match status" value="1"/>
</dbReference>
<dbReference type="FunFam" id="2.40.50.140:FF:000003">
    <property type="entry name" value="50S ribosomal protein L2"/>
    <property type="match status" value="1"/>
</dbReference>
<dbReference type="FunFam" id="4.10.950.10:FF:000001">
    <property type="entry name" value="50S ribosomal protein L2"/>
    <property type="match status" value="1"/>
</dbReference>
<dbReference type="Gene3D" id="2.30.30.30">
    <property type="match status" value="1"/>
</dbReference>
<dbReference type="Gene3D" id="2.40.50.140">
    <property type="entry name" value="Nucleic acid-binding proteins"/>
    <property type="match status" value="1"/>
</dbReference>
<dbReference type="Gene3D" id="4.10.950.10">
    <property type="entry name" value="Ribosomal protein L2, domain 3"/>
    <property type="match status" value="1"/>
</dbReference>
<dbReference type="HAMAP" id="MF_01320_B">
    <property type="entry name" value="Ribosomal_uL2_B"/>
    <property type="match status" value="1"/>
</dbReference>
<dbReference type="InterPro" id="IPR012340">
    <property type="entry name" value="NA-bd_OB-fold"/>
</dbReference>
<dbReference type="InterPro" id="IPR014722">
    <property type="entry name" value="Rib_uL2_dom2"/>
</dbReference>
<dbReference type="InterPro" id="IPR002171">
    <property type="entry name" value="Ribosomal_uL2"/>
</dbReference>
<dbReference type="InterPro" id="IPR005880">
    <property type="entry name" value="Ribosomal_uL2_bac/org-type"/>
</dbReference>
<dbReference type="InterPro" id="IPR022669">
    <property type="entry name" value="Ribosomal_uL2_C"/>
</dbReference>
<dbReference type="InterPro" id="IPR014726">
    <property type="entry name" value="Ribosomal_uL2_dom3"/>
</dbReference>
<dbReference type="InterPro" id="IPR022666">
    <property type="entry name" value="Ribosomal_uL2_RNA-bd_dom"/>
</dbReference>
<dbReference type="InterPro" id="IPR008991">
    <property type="entry name" value="Translation_prot_SH3-like_sf"/>
</dbReference>
<dbReference type="NCBIfam" id="TIGR01171">
    <property type="entry name" value="rplB_bact"/>
    <property type="match status" value="1"/>
</dbReference>
<dbReference type="PANTHER" id="PTHR13691:SF5">
    <property type="entry name" value="LARGE RIBOSOMAL SUBUNIT PROTEIN UL2M"/>
    <property type="match status" value="1"/>
</dbReference>
<dbReference type="PANTHER" id="PTHR13691">
    <property type="entry name" value="RIBOSOMAL PROTEIN L2"/>
    <property type="match status" value="1"/>
</dbReference>
<dbReference type="Pfam" id="PF00181">
    <property type="entry name" value="Ribosomal_L2"/>
    <property type="match status" value="1"/>
</dbReference>
<dbReference type="Pfam" id="PF03947">
    <property type="entry name" value="Ribosomal_L2_C"/>
    <property type="match status" value="1"/>
</dbReference>
<dbReference type="PIRSF" id="PIRSF002158">
    <property type="entry name" value="Ribosomal_L2"/>
    <property type="match status" value="1"/>
</dbReference>
<dbReference type="SMART" id="SM01383">
    <property type="entry name" value="Ribosomal_L2"/>
    <property type="match status" value="1"/>
</dbReference>
<dbReference type="SMART" id="SM01382">
    <property type="entry name" value="Ribosomal_L2_C"/>
    <property type="match status" value="1"/>
</dbReference>
<dbReference type="SUPFAM" id="SSF50249">
    <property type="entry name" value="Nucleic acid-binding proteins"/>
    <property type="match status" value="1"/>
</dbReference>
<dbReference type="SUPFAM" id="SSF50104">
    <property type="entry name" value="Translation proteins SH3-like domain"/>
    <property type="match status" value="1"/>
</dbReference>
<name>RL2_CHLCH</name>
<evidence type="ECO:0000255" key="1">
    <source>
        <dbReference type="HAMAP-Rule" id="MF_01320"/>
    </source>
</evidence>
<evidence type="ECO:0000256" key="2">
    <source>
        <dbReference type="SAM" id="MobiDB-lite"/>
    </source>
</evidence>
<evidence type="ECO:0000305" key="3"/>
<gene>
    <name evidence="1" type="primary">rplB</name>
    <name type="ordered locus">Cag_1848</name>
</gene>
<accession>Q3APH6</accession>
<protein>
    <recommendedName>
        <fullName evidence="1">Large ribosomal subunit protein uL2</fullName>
    </recommendedName>
    <alternativeName>
        <fullName evidence="3">50S ribosomal protein L2</fullName>
    </alternativeName>
</protein>
<comment type="function">
    <text evidence="1">One of the primary rRNA binding proteins. Required for association of the 30S and 50S subunits to form the 70S ribosome, for tRNA binding and peptide bond formation. It has been suggested to have peptidyltransferase activity; this is somewhat controversial. Makes several contacts with the 16S rRNA in the 70S ribosome.</text>
</comment>
<comment type="subunit">
    <text evidence="1">Part of the 50S ribosomal subunit. Forms a bridge to the 30S subunit in the 70S ribosome.</text>
</comment>
<comment type="similarity">
    <text evidence="1">Belongs to the universal ribosomal protein uL2 family.</text>
</comment>
<reference key="1">
    <citation type="submission" date="2005-08" db="EMBL/GenBank/DDBJ databases">
        <title>Complete sequence of Chlorobium chlorochromatii CaD3.</title>
        <authorList>
            <consortium name="US DOE Joint Genome Institute"/>
            <person name="Copeland A."/>
            <person name="Lucas S."/>
            <person name="Lapidus A."/>
            <person name="Barry K."/>
            <person name="Detter J.C."/>
            <person name="Glavina T."/>
            <person name="Hammon N."/>
            <person name="Israni S."/>
            <person name="Pitluck S."/>
            <person name="Bryant D."/>
            <person name="Schmutz J."/>
            <person name="Larimer F."/>
            <person name="Land M."/>
            <person name="Kyrpides N."/>
            <person name="Ivanova N."/>
            <person name="Richardson P."/>
        </authorList>
    </citation>
    <scope>NUCLEOTIDE SEQUENCE [LARGE SCALE GENOMIC DNA]</scope>
    <source>
        <strain>CaD3</strain>
    </source>
</reference>
<proteinExistence type="inferred from homology"/>
<sequence length="279" mass="30438">MAIRKLAPVTPGSRFMSYPVFDEITKSKPEKSLLEPLTKSGGRNSAGRKTSRHRGGGHKRHYRIIDFKRNKDGIVATVAAIEYDPNRSARIALLHYIDGEKRYILAPKGLKVGDKVESGEKVEIKTGNTMPMKNIPLGTDIHNIEMKAGKGGQIVRSAGAFAVLAAREGDYVTLKLPSGEIRKVRVECRATIGVIGNADHENIDLGKAGRSRWLGIRPQTRGMAMNPVDHPMGGGEGKSKSGGGRKHPKSPWGQLAKGLKTRNRKKASQKLIVRGRNAK</sequence>
<keyword id="KW-0687">Ribonucleoprotein</keyword>
<keyword id="KW-0689">Ribosomal protein</keyword>
<keyword id="KW-0694">RNA-binding</keyword>
<keyword id="KW-0699">rRNA-binding</keyword>
<feature type="chain" id="PRO_0000237173" description="Large ribosomal subunit protein uL2">
    <location>
        <begin position="1"/>
        <end position="279"/>
    </location>
</feature>
<feature type="region of interest" description="Disordered" evidence="2">
    <location>
        <begin position="31"/>
        <end position="61"/>
    </location>
</feature>
<feature type="region of interest" description="Disordered" evidence="2">
    <location>
        <begin position="222"/>
        <end position="279"/>
    </location>
</feature>
<feature type="compositionally biased region" description="Basic residues" evidence="2">
    <location>
        <begin position="49"/>
        <end position="61"/>
    </location>
</feature>
<feature type="compositionally biased region" description="Gly residues" evidence="2">
    <location>
        <begin position="232"/>
        <end position="242"/>
    </location>
</feature>
<feature type="compositionally biased region" description="Basic residues" evidence="2">
    <location>
        <begin position="259"/>
        <end position="268"/>
    </location>
</feature>